<sequence>MNISTLRLDSNPITTATATHRNGILGCNGTYSCRFNQFQQRKKTPSVIVCSTKPLASVVDHQGVNESGLSRIESLSQVSGVLGCQWGDEGKGKLVDILAKHFDIVARCQGGANAGHTIYNSEGKKFALHLVPSGILNEETLCVIGNGVVVHLPGLFKEIDGLEANGVSCQGRILVSDRAHLLFDFHQEIDGLREAELAKSFIGTTKRGIGPCYSSKVIRNGLRVSDLRHMDIFPQKLDLLLSDAAARFPGFKYGPDMLREEVERYKKFAERLEPFVADTVHFMNDAISQKKKILVEGGQATMLDIDFGTYPFVTSSSPSAGGICTGLGIAPRVVGDLVGVVKAYTTRVGSGPFPTEIMDKGGDLLRFAGQEFGTTTGRPRRCGWLDIVALRFCCQINGFASLNLTKLDVLSDLPEIQLGVTYRHPDGSALNSFPSDLRLLEQIKVEYEVLPGWKSDISSIRKYTDLPKAAREYVERIEELIGVPIHYIGIGPGRDALIYK</sequence>
<gene>
    <name evidence="2" type="primary">PURA</name>
    <name type="ORF">7.POTATO.5</name>
</gene>
<organism>
    <name type="scientific">Solanum bulbocastanum</name>
    <name type="common">Wild potato</name>
    <dbReference type="NCBI Taxonomy" id="147425"/>
    <lineage>
        <taxon>Eukaryota</taxon>
        <taxon>Viridiplantae</taxon>
        <taxon>Streptophyta</taxon>
        <taxon>Embryophyta</taxon>
        <taxon>Tracheophyta</taxon>
        <taxon>Spermatophyta</taxon>
        <taxon>Magnoliopsida</taxon>
        <taxon>eudicotyledons</taxon>
        <taxon>Gunneridae</taxon>
        <taxon>Pentapetalae</taxon>
        <taxon>asterids</taxon>
        <taxon>lamiids</taxon>
        <taxon>Solanales</taxon>
        <taxon>Solanaceae</taxon>
        <taxon>Solanoideae</taxon>
        <taxon>Solaneae</taxon>
        <taxon>Solanum</taxon>
    </lineage>
</organism>
<dbReference type="EC" id="6.3.4.4" evidence="2"/>
<dbReference type="EMBL" id="EF517794">
    <property type="protein sequence ID" value="ABU45204.1"/>
    <property type="molecule type" value="Genomic_DNA"/>
</dbReference>
<dbReference type="SMR" id="A9XLG1"/>
<dbReference type="UniPathway" id="UPA00075">
    <property type="reaction ID" value="UER00335"/>
</dbReference>
<dbReference type="GO" id="GO:0009507">
    <property type="term" value="C:chloroplast"/>
    <property type="evidence" value="ECO:0007669"/>
    <property type="project" value="UniProtKB-SubCell"/>
</dbReference>
<dbReference type="GO" id="GO:0004019">
    <property type="term" value="F:adenylosuccinate synthase activity"/>
    <property type="evidence" value="ECO:0007669"/>
    <property type="project" value="UniProtKB-UniRule"/>
</dbReference>
<dbReference type="GO" id="GO:0005525">
    <property type="term" value="F:GTP binding"/>
    <property type="evidence" value="ECO:0007669"/>
    <property type="project" value="UniProtKB-UniRule"/>
</dbReference>
<dbReference type="GO" id="GO:0000287">
    <property type="term" value="F:magnesium ion binding"/>
    <property type="evidence" value="ECO:0007669"/>
    <property type="project" value="UniProtKB-UniRule"/>
</dbReference>
<dbReference type="GO" id="GO:0044208">
    <property type="term" value="P:'de novo' AMP biosynthetic process"/>
    <property type="evidence" value="ECO:0007669"/>
    <property type="project" value="UniProtKB-UniRule"/>
</dbReference>
<dbReference type="GO" id="GO:0046040">
    <property type="term" value="P:IMP metabolic process"/>
    <property type="evidence" value="ECO:0007669"/>
    <property type="project" value="TreeGrafter"/>
</dbReference>
<dbReference type="CDD" id="cd03108">
    <property type="entry name" value="AdSS"/>
    <property type="match status" value="1"/>
</dbReference>
<dbReference type="FunFam" id="3.90.170.10:FF:000001">
    <property type="entry name" value="Adenylosuccinate synthetase"/>
    <property type="match status" value="1"/>
</dbReference>
<dbReference type="FunFam" id="1.10.300.10:FF:000002">
    <property type="entry name" value="Adenylosuccinate synthetase, chloroplastic"/>
    <property type="match status" value="1"/>
</dbReference>
<dbReference type="Gene3D" id="3.40.440.10">
    <property type="entry name" value="Adenylosuccinate Synthetase, subunit A, domain 1"/>
    <property type="match status" value="1"/>
</dbReference>
<dbReference type="Gene3D" id="1.10.300.10">
    <property type="entry name" value="Adenylosuccinate Synthetase, subunit A, domain 2"/>
    <property type="match status" value="1"/>
</dbReference>
<dbReference type="Gene3D" id="3.90.170.10">
    <property type="entry name" value="Adenylosuccinate Synthetase, subunit A, domain 3"/>
    <property type="match status" value="1"/>
</dbReference>
<dbReference type="HAMAP" id="MF_00011">
    <property type="entry name" value="Adenylosucc_synth"/>
    <property type="match status" value="1"/>
</dbReference>
<dbReference type="InterPro" id="IPR018220">
    <property type="entry name" value="Adenylosuccin_syn_GTP-bd"/>
</dbReference>
<dbReference type="InterPro" id="IPR033128">
    <property type="entry name" value="Adenylosuccin_syn_Lys_AS"/>
</dbReference>
<dbReference type="InterPro" id="IPR042109">
    <property type="entry name" value="Adenylosuccinate_synth_dom1"/>
</dbReference>
<dbReference type="InterPro" id="IPR042110">
    <property type="entry name" value="Adenylosuccinate_synth_dom2"/>
</dbReference>
<dbReference type="InterPro" id="IPR042111">
    <property type="entry name" value="Adenylosuccinate_synth_dom3"/>
</dbReference>
<dbReference type="InterPro" id="IPR001114">
    <property type="entry name" value="Adenylosuccinate_synthetase"/>
</dbReference>
<dbReference type="InterPro" id="IPR027417">
    <property type="entry name" value="P-loop_NTPase"/>
</dbReference>
<dbReference type="NCBIfam" id="NF002223">
    <property type="entry name" value="PRK01117.1"/>
    <property type="match status" value="1"/>
</dbReference>
<dbReference type="NCBIfam" id="TIGR00184">
    <property type="entry name" value="purA"/>
    <property type="match status" value="1"/>
</dbReference>
<dbReference type="PANTHER" id="PTHR11846">
    <property type="entry name" value="ADENYLOSUCCINATE SYNTHETASE"/>
    <property type="match status" value="1"/>
</dbReference>
<dbReference type="PANTHER" id="PTHR11846:SF18">
    <property type="entry name" value="ADENYLOSUCCINATE SYNTHETASE, CHLOROPLASTIC"/>
    <property type="match status" value="1"/>
</dbReference>
<dbReference type="Pfam" id="PF00709">
    <property type="entry name" value="Adenylsucc_synt"/>
    <property type="match status" value="1"/>
</dbReference>
<dbReference type="SMART" id="SM00788">
    <property type="entry name" value="Adenylsucc_synt"/>
    <property type="match status" value="1"/>
</dbReference>
<dbReference type="SUPFAM" id="SSF52540">
    <property type="entry name" value="P-loop containing nucleoside triphosphate hydrolases"/>
    <property type="match status" value="1"/>
</dbReference>
<dbReference type="PROSITE" id="PS01266">
    <property type="entry name" value="ADENYLOSUCCIN_SYN_1"/>
    <property type="match status" value="1"/>
</dbReference>
<dbReference type="PROSITE" id="PS00513">
    <property type="entry name" value="ADENYLOSUCCIN_SYN_2"/>
    <property type="match status" value="1"/>
</dbReference>
<keyword id="KW-0150">Chloroplast</keyword>
<keyword id="KW-0342">GTP-binding</keyword>
<keyword id="KW-0436">Ligase</keyword>
<keyword id="KW-0460">Magnesium</keyword>
<keyword id="KW-0479">Metal-binding</keyword>
<keyword id="KW-0547">Nucleotide-binding</keyword>
<keyword id="KW-0934">Plastid</keyword>
<keyword id="KW-0658">Purine biosynthesis</keyword>
<proteinExistence type="inferred from homology"/>
<feature type="chain" id="PRO_0000399286" description="Adenylosuccinate synthetase, chloroplastic">
    <location>
        <begin position="1"/>
        <end position="500"/>
    </location>
</feature>
<feature type="active site" description="Proton acceptor" evidence="2">
    <location>
        <position position="88"/>
    </location>
</feature>
<feature type="active site" description="Proton donor" evidence="2">
    <location>
        <position position="116"/>
    </location>
</feature>
<feature type="binding site" evidence="2">
    <location>
        <begin position="87"/>
        <end position="93"/>
    </location>
    <ligand>
        <name>GTP</name>
        <dbReference type="ChEBI" id="CHEBI:37565"/>
    </ligand>
</feature>
<feature type="binding site" description="in other chain" evidence="2">
    <location>
        <begin position="88"/>
        <end position="91"/>
    </location>
    <ligand>
        <name>IMP</name>
        <dbReference type="ChEBI" id="CHEBI:58053"/>
        <note>ligand shared between dimeric partners</note>
    </ligand>
</feature>
<feature type="binding site" evidence="2">
    <location>
        <position position="88"/>
    </location>
    <ligand>
        <name>Mg(2+)</name>
        <dbReference type="ChEBI" id="CHEBI:18420"/>
    </ligand>
</feature>
<feature type="binding site" description="in other chain" evidence="2">
    <location>
        <begin position="113"/>
        <end position="116"/>
    </location>
    <ligand>
        <name>IMP</name>
        <dbReference type="ChEBI" id="CHEBI:58053"/>
        <note>ligand shared between dimeric partners</note>
    </ligand>
</feature>
<feature type="binding site" evidence="2">
    <location>
        <begin position="115"/>
        <end position="117"/>
    </location>
    <ligand>
        <name>GTP</name>
        <dbReference type="ChEBI" id="CHEBI:37565"/>
    </ligand>
</feature>
<feature type="binding site" evidence="2">
    <location>
        <position position="115"/>
    </location>
    <ligand>
        <name>Mg(2+)</name>
        <dbReference type="ChEBI" id="CHEBI:18420"/>
    </ligand>
</feature>
<feature type="binding site" description="in other chain" evidence="2">
    <location>
        <position position="205"/>
    </location>
    <ligand>
        <name>IMP</name>
        <dbReference type="ChEBI" id="CHEBI:58053"/>
        <note>ligand shared between dimeric partners</note>
    </ligand>
</feature>
<feature type="binding site" evidence="2">
    <location>
        <position position="219"/>
    </location>
    <ligand>
        <name>IMP</name>
        <dbReference type="ChEBI" id="CHEBI:58053"/>
        <note>ligand shared between dimeric partners</note>
    </ligand>
</feature>
<feature type="binding site" description="in other chain" evidence="2">
    <location>
        <position position="299"/>
    </location>
    <ligand>
        <name>IMP</name>
        <dbReference type="ChEBI" id="CHEBI:58053"/>
        <note>ligand shared between dimeric partners</note>
    </ligand>
</feature>
<feature type="binding site" description="in other chain" evidence="2">
    <location>
        <position position="314"/>
    </location>
    <ligand>
        <name>IMP</name>
        <dbReference type="ChEBI" id="CHEBI:58053"/>
        <note>ligand shared between dimeric partners</note>
    </ligand>
</feature>
<feature type="binding site" evidence="2">
    <location>
        <begin position="374"/>
        <end position="380"/>
    </location>
    <ligand>
        <name>substrate</name>
    </ligand>
</feature>
<feature type="binding site" description="in other chain" evidence="2">
    <location>
        <position position="378"/>
    </location>
    <ligand>
        <name>IMP</name>
        <dbReference type="ChEBI" id="CHEBI:58053"/>
        <note>ligand shared between dimeric partners</note>
    </ligand>
</feature>
<feature type="binding site" evidence="2">
    <location>
        <position position="380"/>
    </location>
    <ligand>
        <name>GTP</name>
        <dbReference type="ChEBI" id="CHEBI:37565"/>
    </ligand>
</feature>
<feature type="binding site" evidence="2">
    <location>
        <begin position="406"/>
        <end position="408"/>
    </location>
    <ligand>
        <name>GTP</name>
        <dbReference type="ChEBI" id="CHEBI:37565"/>
    </ligand>
</feature>
<feature type="binding site" evidence="2">
    <location>
        <begin position="489"/>
        <end position="491"/>
    </location>
    <ligand>
        <name>GTP</name>
        <dbReference type="ChEBI" id="CHEBI:37565"/>
    </ligand>
</feature>
<protein>
    <recommendedName>
        <fullName evidence="2">Adenylosuccinate synthetase, chloroplastic</fullName>
        <shortName evidence="2">AMPSase</shortName>
        <shortName evidence="2">AdSS</shortName>
        <ecNumber evidence="2">6.3.4.4</ecNumber>
    </recommendedName>
    <alternativeName>
        <fullName evidence="2">IMP--aspartate ligase</fullName>
    </alternativeName>
</protein>
<name>PURA_SOLBU</name>
<accession>A9XLG1</accession>
<evidence type="ECO:0000250" key="1"/>
<evidence type="ECO:0000255" key="2">
    <source>
        <dbReference type="HAMAP-Rule" id="MF_03125"/>
    </source>
</evidence>
<comment type="function">
    <text evidence="1">Plays an important role in the de novo pathway and in the salvage pathway of purine nucleotide biosynthesis. Catalyzes the first committed step in the biosynthesis of AMP from IMP (By similarity).</text>
</comment>
<comment type="catalytic activity">
    <reaction evidence="2">
        <text>IMP + L-aspartate + GTP = N(6)-(1,2-dicarboxyethyl)-AMP + GDP + phosphate + 2 H(+)</text>
        <dbReference type="Rhea" id="RHEA:15753"/>
        <dbReference type="ChEBI" id="CHEBI:15378"/>
        <dbReference type="ChEBI" id="CHEBI:29991"/>
        <dbReference type="ChEBI" id="CHEBI:37565"/>
        <dbReference type="ChEBI" id="CHEBI:43474"/>
        <dbReference type="ChEBI" id="CHEBI:57567"/>
        <dbReference type="ChEBI" id="CHEBI:58053"/>
        <dbReference type="ChEBI" id="CHEBI:58189"/>
        <dbReference type="EC" id="6.3.4.4"/>
    </reaction>
</comment>
<comment type="cofactor">
    <cofactor evidence="2">
        <name>Mg(2+)</name>
        <dbReference type="ChEBI" id="CHEBI:18420"/>
    </cofactor>
    <text evidence="2">Binds 1 Mg(2+) ion per subunit.</text>
</comment>
<comment type="pathway">
    <text evidence="2">Purine metabolism; AMP biosynthesis via de novo pathway; AMP from IMP: step 1/2.</text>
</comment>
<comment type="subunit">
    <text evidence="2">Homodimer.</text>
</comment>
<comment type="subcellular location">
    <subcellularLocation>
        <location evidence="2">Plastid</location>
        <location evidence="2">Chloroplast</location>
    </subcellularLocation>
</comment>
<comment type="miscellaneous">
    <text evidence="2">This protein may be expected to contain an N-terminal transit peptide but none has been predicted.</text>
</comment>
<comment type="similarity">
    <text evidence="2">Belongs to the adenylosuccinate synthetase family.</text>
</comment>
<reference key="1">
    <citation type="journal article" date="2008" name="Genetics">
        <title>Sequencing and comparative analysis of a conserved syntenic segment in the solanaceae.</title>
        <authorList>
            <person name="Wang Y."/>
            <person name="Diehl A."/>
            <person name="Wu F."/>
            <person name="Vrebalov J."/>
            <person name="Giovannoni J."/>
            <person name="Siepel A."/>
            <person name="Tanksley S.D."/>
        </authorList>
    </citation>
    <scope>NUCLEOTIDE SEQUENCE [GENOMIC DNA]</scope>
</reference>